<protein>
    <recommendedName>
        <fullName evidence="1">Glycerol-3-phosphate dehydrogenase [NAD(P)+]</fullName>
        <ecNumber evidence="1">1.1.1.94</ecNumber>
    </recommendedName>
    <alternativeName>
        <fullName evidence="1">NAD(P)(+)-dependent glycerol-3-phosphate dehydrogenase</fullName>
    </alternativeName>
    <alternativeName>
        <fullName evidence="1">NAD(P)H-dependent dihydroxyacetone-phosphate reductase</fullName>
    </alternativeName>
</protein>
<evidence type="ECO:0000255" key="1">
    <source>
        <dbReference type="HAMAP-Rule" id="MF_00394"/>
    </source>
</evidence>
<gene>
    <name evidence="1" type="primary">gpsA</name>
    <name type="ordered locus">Franean1_1123</name>
</gene>
<dbReference type="EC" id="1.1.1.94" evidence="1"/>
<dbReference type="EMBL" id="CP000820">
    <property type="protein sequence ID" value="ABW10577.1"/>
    <property type="molecule type" value="Genomic_DNA"/>
</dbReference>
<dbReference type="RefSeq" id="WP_020458757.1">
    <property type="nucleotide sequence ID" value="NC_009921.1"/>
</dbReference>
<dbReference type="SMR" id="A8L577"/>
<dbReference type="STRING" id="298653.Franean1_1123"/>
<dbReference type="KEGG" id="fre:Franean1_1123"/>
<dbReference type="eggNOG" id="COG0240">
    <property type="taxonomic scope" value="Bacteria"/>
</dbReference>
<dbReference type="HOGENOM" id="CLU_033449_0_2_11"/>
<dbReference type="UniPathway" id="UPA00940"/>
<dbReference type="GO" id="GO:0005829">
    <property type="term" value="C:cytosol"/>
    <property type="evidence" value="ECO:0007669"/>
    <property type="project" value="TreeGrafter"/>
</dbReference>
<dbReference type="GO" id="GO:0047952">
    <property type="term" value="F:glycerol-3-phosphate dehydrogenase [NAD(P)+] activity"/>
    <property type="evidence" value="ECO:0007669"/>
    <property type="project" value="UniProtKB-UniRule"/>
</dbReference>
<dbReference type="GO" id="GO:0051287">
    <property type="term" value="F:NAD binding"/>
    <property type="evidence" value="ECO:0007669"/>
    <property type="project" value="InterPro"/>
</dbReference>
<dbReference type="GO" id="GO:0005975">
    <property type="term" value="P:carbohydrate metabolic process"/>
    <property type="evidence" value="ECO:0007669"/>
    <property type="project" value="InterPro"/>
</dbReference>
<dbReference type="GO" id="GO:0046167">
    <property type="term" value="P:glycerol-3-phosphate biosynthetic process"/>
    <property type="evidence" value="ECO:0007669"/>
    <property type="project" value="UniProtKB-UniRule"/>
</dbReference>
<dbReference type="GO" id="GO:0046168">
    <property type="term" value="P:glycerol-3-phosphate catabolic process"/>
    <property type="evidence" value="ECO:0007669"/>
    <property type="project" value="InterPro"/>
</dbReference>
<dbReference type="GO" id="GO:0006650">
    <property type="term" value="P:glycerophospholipid metabolic process"/>
    <property type="evidence" value="ECO:0007669"/>
    <property type="project" value="UniProtKB-UniRule"/>
</dbReference>
<dbReference type="GO" id="GO:0008654">
    <property type="term" value="P:phospholipid biosynthetic process"/>
    <property type="evidence" value="ECO:0007669"/>
    <property type="project" value="UniProtKB-KW"/>
</dbReference>
<dbReference type="FunFam" id="1.10.1040.10:FF:000001">
    <property type="entry name" value="Glycerol-3-phosphate dehydrogenase [NAD(P)+]"/>
    <property type="match status" value="1"/>
</dbReference>
<dbReference type="FunFam" id="3.40.50.720:FF:000019">
    <property type="entry name" value="Glycerol-3-phosphate dehydrogenase [NAD(P)+]"/>
    <property type="match status" value="1"/>
</dbReference>
<dbReference type="Gene3D" id="1.10.1040.10">
    <property type="entry name" value="N-(1-d-carboxylethyl)-l-norvaline Dehydrogenase, domain 2"/>
    <property type="match status" value="1"/>
</dbReference>
<dbReference type="Gene3D" id="3.40.50.720">
    <property type="entry name" value="NAD(P)-binding Rossmann-like Domain"/>
    <property type="match status" value="1"/>
</dbReference>
<dbReference type="HAMAP" id="MF_00394">
    <property type="entry name" value="NAD_Glyc3P_dehydrog"/>
    <property type="match status" value="1"/>
</dbReference>
<dbReference type="InterPro" id="IPR008927">
    <property type="entry name" value="6-PGluconate_DH-like_C_sf"/>
</dbReference>
<dbReference type="InterPro" id="IPR013328">
    <property type="entry name" value="6PGD_dom2"/>
</dbReference>
<dbReference type="InterPro" id="IPR006168">
    <property type="entry name" value="G3P_DH_NAD-dep"/>
</dbReference>
<dbReference type="InterPro" id="IPR006109">
    <property type="entry name" value="G3P_DH_NAD-dep_C"/>
</dbReference>
<dbReference type="InterPro" id="IPR011128">
    <property type="entry name" value="G3P_DH_NAD-dep_N"/>
</dbReference>
<dbReference type="InterPro" id="IPR036291">
    <property type="entry name" value="NAD(P)-bd_dom_sf"/>
</dbReference>
<dbReference type="NCBIfam" id="NF000940">
    <property type="entry name" value="PRK00094.1-2"/>
    <property type="match status" value="1"/>
</dbReference>
<dbReference type="NCBIfam" id="NF000942">
    <property type="entry name" value="PRK00094.1-4"/>
    <property type="match status" value="1"/>
</dbReference>
<dbReference type="PANTHER" id="PTHR11728">
    <property type="entry name" value="GLYCEROL-3-PHOSPHATE DEHYDROGENASE"/>
    <property type="match status" value="1"/>
</dbReference>
<dbReference type="PANTHER" id="PTHR11728:SF1">
    <property type="entry name" value="GLYCEROL-3-PHOSPHATE DEHYDROGENASE [NAD(+)] 2, CHLOROPLASTIC"/>
    <property type="match status" value="1"/>
</dbReference>
<dbReference type="Pfam" id="PF07479">
    <property type="entry name" value="NAD_Gly3P_dh_C"/>
    <property type="match status" value="1"/>
</dbReference>
<dbReference type="Pfam" id="PF01210">
    <property type="entry name" value="NAD_Gly3P_dh_N"/>
    <property type="match status" value="1"/>
</dbReference>
<dbReference type="PIRSF" id="PIRSF000114">
    <property type="entry name" value="Glycerol-3-P_dh"/>
    <property type="match status" value="1"/>
</dbReference>
<dbReference type="PRINTS" id="PR00077">
    <property type="entry name" value="GPDHDRGNASE"/>
</dbReference>
<dbReference type="SUPFAM" id="SSF48179">
    <property type="entry name" value="6-phosphogluconate dehydrogenase C-terminal domain-like"/>
    <property type="match status" value="1"/>
</dbReference>
<dbReference type="SUPFAM" id="SSF51735">
    <property type="entry name" value="NAD(P)-binding Rossmann-fold domains"/>
    <property type="match status" value="1"/>
</dbReference>
<dbReference type="PROSITE" id="PS00957">
    <property type="entry name" value="NAD_G3PDH"/>
    <property type="match status" value="1"/>
</dbReference>
<comment type="function">
    <text evidence="1">Catalyzes the reduction of the glycolytic intermediate dihydroxyacetone phosphate (DHAP) to sn-glycerol 3-phosphate (G3P), the key precursor for phospholipid synthesis.</text>
</comment>
<comment type="catalytic activity">
    <reaction evidence="1">
        <text>sn-glycerol 3-phosphate + NAD(+) = dihydroxyacetone phosphate + NADH + H(+)</text>
        <dbReference type="Rhea" id="RHEA:11092"/>
        <dbReference type="ChEBI" id="CHEBI:15378"/>
        <dbReference type="ChEBI" id="CHEBI:57540"/>
        <dbReference type="ChEBI" id="CHEBI:57597"/>
        <dbReference type="ChEBI" id="CHEBI:57642"/>
        <dbReference type="ChEBI" id="CHEBI:57945"/>
        <dbReference type="EC" id="1.1.1.94"/>
    </reaction>
    <physiologicalReaction direction="right-to-left" evidence="1">
        <dbReference type="Rhea" id="RHEA:11094"/>
    </physiologicalReaction>
</comment>
<comment type="catalytic activity">
    <reaction evidence="1">
        <text>sn-glycerol 3-phosphate + NADP(+) = dihydroxyacetone phosphate + NADPH + H(+)</text>
        <dbReference type="Rhea" id="RHEA:11096"/>
        <dbReference type="ChEBI" id="CHEBI:15378"/>
        <dbReference type="ChEBI" id="CHEBI:57597"/>
        <dbReference type="ChEBI" id="CHEBI:57642"/>
        <dbReference type="ChEBI" id="CHEBI:57783"/>
        <dbReference type="ChEBI" id="CHEBI:58349"/>
        <dbReference type="EC" id="1.1.1.94"/>
    </reaction>
    <physiologicalReaction direction="right-to-left" evidence="1">
        <dbReference type="Rhea" id="RHEA:11098"/>
    </physiologicalReaction>
</comment>
<comment type="pathway">
    <text evidence="1">Membrane lipid metabolism; glycerophospholipid metabolism.</text>
</comment>
<comment type="subcellular location">
    <subcellularLocation>
        <location evidence="1">Cytoplasm</location>
    </subcellularLocation>
</comment>
<comment type="similarity">
    <text evidence="1">Belongs to the NAD-dependent glycerol-3-phosphate dehydrogenase family.</text>
</comment>
<organism>
    <name type="scientific">Parafrankia sp. (strain EAN1pec)</name>
    <dbReference type="NCBI Taxonomy" id="298653"/>
    <lineage>
        <taxon>Bacteria</taxon>
        <taxon>Bacillati</taxon>
        <taxon>Actinomycetota</taxon>
        <taxon>Actinomycetes</taxon>
        <taxon>Frankiales</taxon>
        <taxon>Frankiaceae</taxon>
        <taxon>Parafrankia</taxon>
    </lineage>
</organism>
<name>GPDA_PARS2</name>
<feature type="chain" id="PRO_1000190152" description="Glycerol-3-phosphate dehydrogenase [NAD(P)+]">
    <location>
        <begin position="1"/>
        <end position="334"/>
    </location>
</feature>
<feature type="active site" description="Proton acceptor" evidence="1">
    <location>
        <position position="191"/>
    </location>
</feature>
<feature type="binding site" evidence="1">
    <location>
        <position position="11"/>
    </location>
    <ligand>
        <name>NADPH</name>
        <dbReference type="ChEBI" id="CHEBI:57783"/>
    </ligand>
</feature>
<feature type="binding site" evidence="1">
    <location>
        <position position="12"/>
    </location>
    <ligand>
        <name>NADPH</name>
        <dbReference type="ChEBI" id="CHEBI:57783"/>
    </ligand>
</feature>
<feature type="binding site" evidence="1">
    <location>
        <position position="32"/>
    </location>
    <ligand>
        <name>NADPH</name>
        <dbReference type="ChEBI" id="CHEBI:57783"/>
    </ligand>
</feature>
<feature type="binding site" evidence="1">
    <location>
        <position position="106"/>
    </location>
    <ligand>
        <name>NADPH</name>
        <dbReference type="ChEBI" id="CHEBI:57783"/>
    </ligand>
</feature>
<feature type="binding site" evidence="1">
    <location>
        <position position="106"/>
    </location>
    <ligand>
        <name>sn-glycerol 3-phosphate</name>
        <dbReference type="ChEBI" id="CHEBI:57597"/>
    </ligand>
</feature>
<feature type="binding site" evidence="1">
    <location>
        <position position="136"/>
    </location>
    <ligand>
        <name>sn-glycerol 3-phosphate</name>
        <dbReference type="ChEBI" id="CHEBI:57597"/>
    </ligand>
</feature>
<feature type="binding site" evidence="1">
    <location>
        <position position="140"/>
    </location>
    <ligand>
        <name>NADPH</name>
        <dbReference type="ChEBI" id="CHEBI:57783"/>
    </ligand>
</feature>
<feature type="binding site" evidence="1">
    <location>
        <position position="191"/>
    </location>
    <ligand>
        <name>sn-glycerol 3-phosphate</name>
        <dbReference type="ChEBI" id="CHEBI:57597"/>
    </ligand>
</feature>
<feature type="binding site" evidence="1">
    <location>
        <position position="244"/>
    </location>
    <ligand>
        <name>sn-glycerol 3-phosphate</name>
        <dbReference type="ChEBI" id="CHEBI:57597"/>
    </ligand>
</feature>
<feature type="binding site" evidence="1">
    <location>
        <position position="254"/>
    </location>
    <ligand>
        <name>sn-glycerol 3-phosphate</name>
        <dbReference type="ChEBI" id="CHEBI:57597"/>
    </ligand>
</feature>
<feature type="binding site" evidence="1">
    <location>
        <position position="255"/>
    </location>
    <ligand>
        <name>NADPH</name>
        <dbReference type="ChEBI" id="CHEBI:57783"/>
    </ligand>
</feature>
<feature type="binding site" evidence="1">
    <location>
        <position position="255"/>
    </location>
    <ligand>
        <name>sn-glycerol 3-phosphate</name>
        <dbReference type="ChEBI" id="CHEBI:57597"/>
    </ligand>
</feature>
<feature type="binding site" evidence="1">
    <location>
        <position position="256"/>
    </location>
    <ligand>
        <name>sn-glycerol 3-phosphate</name>
        <dbReference type="ChEBI" id="CHEBI:57597"/>
    </ligand>
</feature>
<feature type="binding site" evidence="1">
    <location>
        <position position="279"/>
    </location>
    <ligand>
        <name>NADPH</name>
        <dbReference type="ChEBI" id="CHEBI:57783"/>
    </ligand>
</feature>
<feature type="binding site" evidence="1">
    <location>
        <position position="281"/>
    </location>
    <ligand>
        <name>NADPH</name>
        <dbReference type="ChEBI" id="CHEBI:57783"/>
    </ligand>
</feature>
<accession>A8L577</accession>
<proteinExistence type="inferred from homology"/>
<reference key="1">
    <citation type="journal article" date="2007" name="Genome Res.">
        <title>Genome characteristics of facultatively symbiotic Frankia sp. strains reflect host range and host plant biogeography.</title>
        <authorList>
            <person name="Normand P."/>
            <person name="Lapierre P."/>
            <person name="Tisa L.S."/>
            <person name="Gogarten J.P."/>
            <person name="Alloisio N."/>
            <person name="Bagnarol E."/>
            <person name="Bassi C.A."/>
            <person name="Berry A.M."/>
            <person name="Bickhart D.M."/>
            <person name="Choisne N."/>
            <person name="Couloux A."/>
            <person name="Cournoyer B."/>
            <person name="Cruveiller S."/>
            <person name="Daubin V."/>
            <person name="Demange N."/>
            <person name="Francino M.P."/>
            <person name="Goltsman E."/>
            <person name="Huang Y."/>
            <person name="Kopp O.R."/>
            <person name="Labarre L."/>
            <person name="Lapidus A."/>
            <person name="Lavire C."/>
            <person name="Marechal J."/>
            <person name="Martinez M."/>
            <person name="Mastronunzio J.E."/>
            <person name="Mullin B.C."/>
            <person name="Niemann J."/>
            <person name="Pujic P."/>
            <person name="Rawnsley T."/>
            <person name="Rouy Z."/>
            <person name="Schenowitz C."/>
            <person name="Sellstedt A."/>
            <person name="Tavares F."/>
            <person name="Tomkins J.P."/>
            <person name="Vallenet D."/>
            <person name="Valverde C."/>
            <person name="Wall L.G."/>
            <person name="Wang Y."/>
            <person name="Medigue C."/>
            <person name="Benson D.R."/>
        </authorList>
    </citation>
    <scope>NUCLEOTIDE SEQUENCE [LARGE SCALE GENOMIC DNA]</scope>
    <source>
        <strain>EAN1pec</strain>
    </source>
</reference>
<keyword id="KW-0963">Cytoplasm</keyword>
<keyword id="KW-0444">Lipid biosynthesis</keyword>
<keyword id="KW-0443">Lipid metabolism</keyword>
<keyword id="KW-0520">NAD</keyword>
<keyword id="KW-0521">NADP</keyword>
<keyword id="KW-0547">Nucleotide-binding</keyword>
<keyword id="KW-0560">Oxidoreductase</keyword>
<keyword id="KW-0594">Phospholipid biosynthesis</keyword>
<keyword id="KW-1208">Phospholipid metabolism</keyword>
<sequence length="334" mass="34859">MRRAAVLTAGSWGTVFAKVLADAGARVTLFARDRAIADAINGRHVNPRYLADVRLPDLVRATSSPERALRDADLVVLAVPSQALRSCLVEWAPLVGPGAVYVSLMKGMEAGSSRRMSEVIAQAAGVGPERIAVVSGPNLAREIAVEHPAATVVASASAATAHAVQAACWTPYLRPYTNADVLGCELGGAVKNVIALAAGMLEGMGFGTNSLASLITRGLAETARLGTALGADPMTFAGLAGLGDLVATCGSPLSRNRTFGEKLGRGMTLDQVLAEQRQVAEGVRSCRPLLALADGLGVSMPITRQVERVLYEGLPPLEAVKDLMSREPGPEYRL</sequence>